<accession>Q1R1M6</accession>
<name>HLDE_CHRSD</name>
<proteinExistence type="inferred from homology"/>
<gene>
    <name evidence="1" type="primary">hldE</name>
    <name type="ordered locus">Csal_0017</name>
</gene>
<comment type="function">
    <text evidence="1">Catalyzes the phosphorylation of D-glycero-D-manno-heptose 7-phosphate at the C-1 position to selectively form D-glycero-beta-D-manno-heptose-1,7-bisphosphate.</text>
</comment>
<comment type="function">
    <text evidence="1">Catalyzes the ADP transfer from ATP to D-glycero-beta-D-manno-heptose 1-phosphate, yielding ADP-D-glycero-beta-D-manno-heptose.</text>
</comment>
<comment type="catalytic activity">
    <reaction evidence="1">
        <text>D-glycero-beta-D-manno-heptose 7-phosphate + ATP = D-glycero-beta-D-manno-heptose 1,7-bisphosphate + ADP + H(+)</text>
        <dbReference type="Rhea" id="RHEA:27473"/>
        <dbReference type="ChEBI" id="CHEBI:15378"/>
        <dbReference type="ChEBI" id="CHEBI:30616"/>
        <dbReference type="ChEBI" id="CHEBI:60204"/>
        <dbReference type="ChEBI" id="CHEBI:60208"/>
        <dbReference type="ChEBI" id="CHEBI:456216"/>
        <dbReference type="EC" id="2.7.1.167"/>
    </reaction>
</comment>
<comment type="catalytic activity">
    <reaction evidence="1">
        <text>D-glycero-beta-D-manno-heptose 1-phosphate + ATP + H(+) = ADP-D-glycero-beta-D-manno-heptose + diphosphate</text>
        <dbReference type="Rhea" id="RHEA:27465"/>
        <dbReference type="ChEBI" id="CHEBI:15378"/>
        <dbReference type="ChEBI" id="CHEBI:30616"/>
        <dbReference type="ChEBI" id="CHEBI:33019"/>
        <dbReference type="ChEBI" id="CHEBI:59967"/>
        <dbReference type="ChEBI" id="CHEBI:61593"/>
        <dbReference type="EC" id="2.7.7.70"/>
    </reaction>
</comment>
<comment type="pathway">
    <text evidence="1">Nucleotide-sugar biosynthesis; ADP-L-glycero-beta-D-manno-heptose biosynthesis; ADP-L-glycero-beta-D-manno-heptose from D-glycero-beta-D-manno-heptose 7-phosphate: step 1/4.</text>
</comment>
<comment type="pathway">
    <text evidence="1">Nucleotide-sugar biosynthesis; ADP-L-glycero-beta-D-manno-heptose biosynthesis; ADP-L-glycero-beta-D-manno-heptose from D-glycero-beta-D-manno-heptose 7-phosphate: step 3/4.</text>
</comment>
<comment type="subunit">
    <text evidence="1">Homodimer.</text>
</comment>
<comment type="similarity">
    <text evidence="1">In the N-terminal section; belongs to the carbohydrate kinase PfkB family.</text>
</comment>
<comment type="similarity">
    <text evidence="1">In the C-terminal section; belongs to the cytidylyltransferase family.</text>
</comment>
<keyword id="KW-0067">ATP-binding</keyword>
<keyword id="KW-0119">Carbohydrate metabolism</keyword>
<keyword id="KW-0418">Kinase</keyword>
<keyword id="KW-0511">Multifunctional enzyme</keyword>
<keyword id="KW-0547">Nucleotide-binding</keyword>
<keyword id="KW-0548">Nucleotidyltransferase</keyword>
<keyword id="KW-1185">Reference proteome</keyword>
<keyword id="KW-0808">Transferase</keyword>
<organism>
    <name type="scientific">Chromohalobacter salexigens (strain ATCC BAA-138 / DSM 3043 / CIP 106854 / NCIMB 13768 / 1H11)</name>
    <dbReference type="NCBI Taxonomy" id="290398"/>
    <lineage>
        <taxon>Bacteria</taxon>
        <taxon>Pseudomonadati</taxon>
        <taxon>Pseudomonadota</taxon>
        <taxon>Gammaproteobacteria</taxon>
        <taxon>Oceanospirillales</taxon>
        <taxon>Halomonadaceae</taxon>
        <taxon>Chromohalobacter</taxon>
    </lineage>
</organism>
<reference key="1">
    <citation type="journal article" date="2011" name="Stand. Genomic Sci.">
        <title>Complete genome sequence of the halophilic and highly halotolerant Chromohalobacter salexigens type strain (1H11(T)).</title>
        <authorList>
            <person name="Copeland A."/>
            <person name="O'Connor K."/>
            <person name="Lucas S."/>
            <person name="Lapidus A."/>
            <person name="Berry K.W."/>
            <person name="Detter J.C."/>
            <person name="Del Rio T.G."/>
            <person name="Hammon N."/>
            <person name="Dalin E."/>
            <person name="Tice H."/>
            <person name="Pitluck S."/>
            <person name="Bruce D."/>
            <person name="Goodwin L."/>
            <person name="Han C."/>
            <person name="Tapia R."/>
            <person name="Saunders E."/>
            <person name="Schmutz J."/>
            <person name="Brettin T."/>
            <person name="Larimer F."/>
            <person name="Land M."/>
            <person name="Hauser L."/>
            <person name="Vargas C."/>
            <person name="Nieto J.J."/>
            <person name="Kyrpides N.C."/>
            <person name="Ivanova N."/>
            <person name="Goker M."/>
            <person name="Klenk H.P."/>
            <person name="Csonka L.N."/>
            <person name="Woyke T."/>
        </authorList>
    </citation>
    <scope>NUCLEOTIDE SEQUENCE [LARGE SCALE GENOMIC DNA]</scope>
    <source>
        <strain>ATCC BAA-138 / DSM 3043 / CIP 106854 / NCIMB 13768 / 1H11</strain>
    </source>
</reference>
<evidence type="ECO:0000255" key="1">
    <source>
        <dbReference type="HAMAP-Rule" id="MF_01603"/>
    </source>
</evidence>
<protein>
    <recommendedName>
        <fullName evidence="1">Bifunctional protein HldE</fullName>
    </recommendedName>
    <domain>
        <recommendedName>
            <fullName evidence="1">D-beta-D-heptose 7-phosphate kinase</fullName>
            <ecNumber evidence="1">2.7.1.167</ecNumber>
        </recommendedName>
        <alternativeName>
            <fullName evidence="1">D-beta-D-heptose 7-phosphotransferase</fullName>
        </alternativeName>
        <alternativeName>
            <fullName evidence="1">D-glycero-beta-D-manno-heptose-7-phosphate kinase</fullName>
        </alternativeName>
    </domain>
    <domain>
        <recommendedName>
            <fullName evidence="1">D-beta-D-heptose 1-phosphate adenylyltransferase</fullName>
            <ecNumber evidence="1">2.7.7.70</ecNumber>
        </recommendedName>
        <alternativeName>
            <fullName evidence="1">D-glycero-beta-D-manno-heptose 1-phosphate adenylyltransferase</fullName>
        </alternativeName>
    </domain>
</protein>
<dbReference type="EC" id="2.7.1.167" evidence="1"/>
<dbReference type="EC" id="2.7.7.70" evidence="1"/>
<dbReference type="EMBL" id="CP000285">
    <property type="protein sequence ID" value="ABE57382.1"/>
    <property type="molecule type" value="Genomic_DNA"/>
</dbReference>
<dbReference type="RefSeq" id="WP_011505328.1">
    <property type="nucleotide sequence ID" value="NC_007963.1"/>
</dbReference>
<dbReference type="SMR" id="Q1R1M6"/>
<dbReference type="STRING" id="290398.Csal_0017"/>
<dbReference type="GeneID" id="95332770"/>
<dbReference type="KEGG" id="csa:Csal_0017"/>
<dbReference type="eggNOG" id="COG0615">
    <property type="taxonomic scope" value="Bacteria"/>
</dbReference>
<dbReference type="eggNOG" id="COG2870">
    <property type="taxonomic scope" value="Bacteria"/>
</dbReference>
<dbReference type="HOGENOM" id="CLU_021150_2_1_6"/>
<dbReference type="OrthoDB" id="9802794at2"/>
<dbReference type="UniPathway" id="UPA00356">
    <property type="reaction ID" value="UER00437"/>
</dbReference>
<dbReference type="UniPathway" id="UPA00356">
    <property type="reaction ID" value="UER00439"/>
</dbReference>
<dbReference type="Proteomes" id="UP000000239">
    <property type="component" value="Chromosome"/>
</dbReference>
<dbReference type="GO" id="GO:0005829">
    <property type="term" value="C:cytosol"/>
    <property type="evidence" value="ECO:0007669"/>
    <property type="project" value="TreeGrafter"/>
</dbReference>
<dbReference type="GO" id="GO:0005524">
    <property type="term" value="F:ATP binding"/>
    <property type="evidence" value="ECO:0007669"/>
    <property type="project" value="UniProtKB-UniRule"/>
</dbReference>
<dbReference type="GO" id="GO:0033785">
    <property type="term" value="F:heptose 7-phosphate kinase activity"/>
    <property type="evidence" value="ECO:0007669"/>
    <property type="project" value="UniProtKB-UniRule"/>
</dbReference>
<dbReference type="GO" id="GO:0033786">
    <property type="term" value="F:heptose-1-phosphate adenylyltransferase activity"/>
    <property type="evidence" value="ECO:0007669"/>
    <property type="project" value="UniProtKB-UniRule"/>
</dbReference>
<dbReference type="GO" id="GO:0016773">
    <property type="term" value="F:phosphotransferase activity, alcohol group as acceptor"/>
    <property type="evidence" value="ECO:0007669"/>
    <property type="project" value="InterPro"/>
</dbReference>
<dbReference type="GO" id="GO:0097171">
    <property type="term" value="P:ADP-L-glycero-beta-D-manno-heptose biosynthetic process"/>
    <property type="evidence" value="ECO:0007669"/>
    <property type="project" value="UniProtKB-UniPathway"/>
</dbReference>
<dbReference type="CDD" id="cd01172">
    <property type="entry name" value="RfaE_like"/>
    <property type="match status" value="1"/>
</dbReference>
<dbReference type="FunFam" id="3.40.1190.20:FF:000002">
    <property type="entry name" value="Bifunctional protein HldE"/>
    <property type="match status" value="1"/>
</dbReference>
<dbReference type="FunFam" id="3.40.50.620:FF:000028">
    <property type="entry name" value="Bifunctional protein HldE"/>
    <property type="match status" value="1"/>
</dbReference>
<dbReference type="Gene3D" id="3.40.1190.20">
    <property type="match status" value="1"/>
</dbReference>
<dbReference type="Gene3D" id="3.40.50.620">
    <property type="entry name" value="HUPs"/>
    <property type="match status" value="1"/>
</dbReference>
<dbReference type="HAMAP" id="MF_01603">
    <property type="entry name" value="HldE"/>
    <property type="match status" value="1"/>
</dbReference>
<dbReference type="InterPro" id="IPR023030">
    <property type="entry name" value="Bifunc_HldE"/>
</dbReference>
<dbReference type="InterPro" id="IPR002173">
    <property type="entry name" value="Carboh/pur_kinase_PfkB_CS"/>
</dbReference>
<dbReference type="InterPro" id="IPR004821">
    <property type="entry name" value="Cyt_trans-like"/>
</dbReference>
<dbReference type="InterPro" id="IPR011611">
    <property type="entry name" value="PfkB_dom"/>
</dbReference>
<dbReference type="InterPro" id="IPR011913">
    <property type="entry name" value="RfaE_dom_I"/>
</dbReference>
<dbReference type="InterPro" id="IPR011914">
    <property type="entry name" value="RfaE_dom_II"/>
</dbReference>
<dbReference type="InterPro" id="IPR029056">
    <property type="entry name" value="Ribokinase-like"/>
</dbReference>
<dbReference type="InterPro" id="IPR014729">
    <property type="entry name" value="Rossmann-like_a/b/a_fold"/>
</dbReference>
<dbReference type="NCBIfam" id="TIGR00125">
    <property type="entry name" value="cyt_tran_rel"/>
    <property type="match status" value="1"/>
</dbReference>
<dbReference type="NCBIfam" id="NF008454">
    <property type="entry name" value="PRK11316.1"/>
    <property type="match status" value="1"/>
</dbReference>
<dbReference type="NCBIfam" id="TIGR02198">
    <property type="entry name" value="rfaE_dom_I"/>
    <property type="match status" value="1"/>
</dbReference>
<dbReference type="NCBIfam" id="TIGR02199">
    <property type="entry name" value="rfaE_dom_II"/>
    <property type="match status" value="1"/>
</dbReference>
<dbReference type="PANTHER" id="PTHR46969">
    <property type="entry name" value="BIFUNCTIONAL PROTEIN HLDE"/>
    <property type="match status" value="1"/>
</dbReference>
<dbReference type="PANTHER" id="PTHR46969:SF1">
    <property type="entry name" value="BIFUNCTIONAL PROTEIN HLDE"/>
    <property type="match status" value="1"/>
</dbReference>
<dbReference type="Pfam" id="PF01467">
    <property type="entry name" value="CTP_transf_like"/>
    <property type="match status" value="1"/>
</dbReference>
<dbReference type="Pfam" id="PF00294">
    <property type="entry name" value="PfkB"/>
    <property type="match status" value="1"/>
</dbReference>
<dbReference type="SUPFAM" id="SSF52374">
    <property type="entry name" value="Nucleotidylyl transferase"/>
    <property type="match status" value="1"/>
</dbReference>
<dbReference type="SUPFAM" id="SSF53613">
    <property type="entry name" value="Ribokinase-like"/>
    <property type="match status" value="1"/>
</dbReference>
<dbReference type="PROSITE" id="PS00583">
    <property type="entry name" value="PFKB_KINASES_1"/>
    <property type="match status" value="1"/>
</dbReference>
<sequence length="476" mass="50710">MKLDLTVLEQARLLVVGDVMLDRYWHGGTSRISPEAPVPVVKVGESEDRPGGAANVALNIAALGAHAALAGVVGEDENADLLAARLEACDVSTYFYRSPEIPTITKLRVMSRNQQLLRLDFEESLWEIDTQGLTERVEAALPEADVVILSDYGKGSLNRVETLIATARGAGKRVLVDPKGHDFAKYRGASIITPNLGEFEAVVGPCPDDATLAEKGERLRAELELEALLVTRSEKGMTLIREGHAPLHLPTHAREVYDVTGAGDTVIGVLGLALAAGHGYPEAIMLANLAAGLVVAKPGTATLSIAELYTALHGDKLAEFGPIEESALIDAVRAAKLRGERVVMTNGCFDILHAGHVAYLEQAKRLGDRLVVAVNDDASVGRLKGPKRPINALERRMQVLAGLSAVDWVVPFGEETPARLIAEVLPDVLVKGGDYRPEDIAGGEAVMAAGGEVRVLNFEDGVSTTAMIDTILDREG</sequence>
<feature type="chain" id="PRO_0000255755" description="Bifunctional protein HldE">
    <location>
        <begin position="1"/>
        <end position="476"/>
    </location>
</feature>
<feature type="region of interest" description="Ribokinase">
    <location>
        <begin position="1"/>
        <end position="318"/>
    </location>
</feature>
<feature type="region of interest" description="Cytidylyltransferase">
    <location>
        <begin position="344"/>
        <end position="476"/>
    </location>
</feature>
<feature type="active site" evidence="1">
    <location>
        <position position="264"/>
    </location>
</feature>
<feature type="binding site" evidence="1">
    <location>
        <begin position="195"/>
        <end position="198"/>
    </location>
    <ligand>
        <name>ATP</name>
        <dbReference type="ChEBI" id="CHEBI:30616"/>
    </ligand>
</feature>